<protein>
    <recommendedName>
        <fullName>Cruciferin</fullName>
    </recommendedName>
    <alternativeName>
        <fullName>11S globulin</fullName>
    </alternativeName>
    <alternativeName>
        <fullName>12S storage protein</fullName>
    </alternativeName>
    <component>
        <recommendedName>
            <fullName>Cruciferin subunit alpha</fullName>
        </recommendedName>
    </component>
    <component>
        <recommendedName>
            <fullName>Cruciferin subunit beta</fullName>
        </recommendedName>
    </component>
</protein>
<dbReference type="EMBL" id="X14555">
    <property type="protein sequence ID" value="CAA32692.1"/>
    <property type="molecule type" value="Genomic_DNA"/>
</dbReference>
<dbReference type="EMBL" id="M16860">
    <property type="protein sequence ID" value="AAA32988.1"/>
    <property type="molecule type" value="mRNA"/>
</dbReference>
<dbReference type="EMBL" id="X57849">
    <property type="protein sequence ID" value="CAA40979.1"/>
    <property type="molecule type" value="mRNA"/>
</dbReference>
<dbReference type="PIR" id="S04095">
    <property type="entry name" value="B35540"/>
</dbReference>
<dbReference type="SMR" id="P11090"/>
<dbReference type="GO" id="GO:0005791">
    <property type="term" value="C:rough endoplasmic reticulum"/>
    <property type="evidence" value="ECO:0007669"/>
    <property type="project" value="UniProtKB-SubCell"/>
</dbReference>
<dbReference type="GO" id="GO:0045735">
    <property type="term" value="F:nutrient reservoir activity"/>
    <property type="evidence" value="ECO:0007669"/>
    <property type="project" value="UniProtKB-KW"/>
</dbReference>
<dbReference type="GO" id="GO:0010431">
    <property type="term" value="P:seed maturation"/>
    <property type="evidence" value="ECO:0007669"/>
    <property type="project" value="UniProtKB-ARBA"/>
</dbReference>
<dbReference type="CDD" id="cd02243">
    <property type="entry name" value="cupin_11S_legumin_C"/>
    <property type="match status" value="1"/>
</dbReference>
<dbReference type="CDD" id="cd02242">
    <property type="entry name" value="cupin_11S_legumin_N"/>
    <property type="match status" value="1"/>
</dbReference>
<dbReference type="FunFam" id="2.60.120.10:FF:000073">
    <property type="entry name" value="Glycinin G1"/>
    <property type="match status" value="1"/>
</dbReference>
<dbReference type="Gene3D" id="2.60.120.10">
    <property type="entry name" value="Jelly Rolls"/>
    <property type="match status" value="2"/>
</dbReference>
<dbReference type="InterPro" id="IPR022379">
    <property type="entry name" value="11S_seedstore_CS"/>
</dbReference>
<dbReference type="InterPro" id="IPR006044">
    <property type="entry name" value="11S_seedstore_pln"/>
</dbReference>
<dbReference type="InterPro" id="IPR006045">
    <property type="entry name" value="Cupin_1"/>
</dbReference>
<dbReference type="InterPro" id="IPR014710">
    <property type="entry name" value="RmlC-like_jellyroll"/>
</dbReference>
<dbReference type="InterPro" id="IPR011051">
    <property type="entry name" value="RmlC_Cupin_sf"/>
</dbReference>
<dbReference type="InterPro" id="IPR050253">
    <property type="entry name" value="Seed_Storage-Functional"/>
</dbReference>
<dbReference type="PANTHER" id="PTHR31189:SF30">
    <property type="entry name" value="12S SEED STORAGE PROTEIN CRA1"/>
    <property type="match status" value="1"/>
</dbReference>
<dbReference type="PANTHER" id="PTHR31189">
    <property type="entry name" value="OS03G0336100 PROTEIN-RELATED"/>
    <property type="match status" value="1"/>
</dbReference>
<dbReference type="Pfam" id="PF00190">
    <property type="entry name" value="Cupin_1"/>
    <property type="match status" value="2"/>
</dbReference>
<dbReference type="PRINTS" id="PR00439">
    <property type="entry name" value="11SGLOBULIN"/>
</dbReference>
<dbReference type="SMART" id="SM00835">
    <property type="entry name" value="Cupin_1"/>
    <property type="match status" value="2"/>
</dbReference>
<dbReference type="SUPFAM" id="SSF51182">
    <property type="entry name" value="RmlC-like cupins"/>
    <property type="match status" value="1"/>
</dbReference>
<dbReference type="PROSITE" id="PS00305">
    <property type="entry name" value="11S_SEED_STORAGE"/>
    <property type="match status" value="1"/>
</dbReference>
<reference key="1">
    <citation type="journal article" date="1989" name="Nucleic Acids Res.">
        <title>Genomic sequence of a 12S seed storage protein from oilseed rape (Brassica napus cv. jet neuf).</title>
        <authorList>
            <person name="Shaw C.H."/>
            <person name="Ryan A.J."/>
        </authorList>
    </citation>
    <scope>NUCLEOTIDE SEQUENCE [GENOMIC DNA]</scope>
    <source>
        <strain>cv. Jet neuf</strain>
        <tissue>Seed</tissue>
    </source>
</reference>
<reference key="2">
    <citation type="journal article" date="1985" name="Plant Mol. Biol.">
        <title>Nucleotide sequence of a cDNA clone of Brassica napus 12S storage protein shows homology with legumin from Pisum sativum.</title>
        <authorList>
            <person name="Simon A.E."/>
            <person name="Tenbarge K.M."/>
            <person name="Scofield S.R."/>
            <person name="Finkelstein R.R."/>
            <person name="Crouch M.L."/>
        </authorList>
        <dbReference type="AGRICOLA" id="IND85080144"/>
    </citation>
    <scope>NUCLEOTIDE SEQUENCE [MRNA]</scope>
</reference>
<reference key="3">
    <citation type="journal article" date="1991" name="Eur. J. Biochem.">
        <title>Characterization of the 12S globulin complex of Brassica napus. Evolutionary relationship to other 11-12S storage globulins.</title>
        <authorList>
            <person name="Sjoedahl S."/>
            <person name="Roedin J."/>
            <person name="Rask L."/>
        </authorList>
    </citation>
    <scope>NUCLEOTIDE SEQUENCE [MRNA] OF 379-488</scope>
    <source>
        <strain>cv. Svalofs Karat 20516-K</strain>
    </source>
</reference>
<reference key="4">
    <citation type="journal article" date="1990" name="J. Biol. Chem.">
        <title>Characterization of a cDNA clone encoding a Brassica napus 12 S protein (cruciferin) subunit. Relationship between precursors and mature chains.</title>
        <authorList>
            <person name="Roedin J."/>
            <person name="Ericson M.L."/>
            <person name="Josefsson L.-G."/>
            <person name="Rask L."/>
        </authorList>
    </citation>
    <scope>PROTEIN SEQUENCE OF 48-74; 108-126; 299-336 AND 358-382</scope>
</reference>
<reference key="5">
    <citation type="journal article" date="1993" name="Eur. J. Biochem.">
        <title>Disulfide interchange reactions in 11S globulin subunits of Cruciferae seeds. Relationships to gene families.</title>
        <authorList>
            <person name="Inquello V."/>
            <person name="Raymond J."/>
            <person name="Azanza J.L."/>
        </authorList>
    </citation>
    <scope>PROTEIN SEQUENCE OF 299-310</scope>
    <scope>DISULFIDE BOND</scope>
</reference>
<accession>P11090</accession>
<accession>Q9SAP6</accession>
<name>CRUA_BRANA</name>
<proteinExistence type="evidence at protein level"/>
<gene>
    <name type="primary">CRUA</name>
    <name type="synonym">CRU2/3</name>
</gene>
<evidence type="ECO:0000250" key="1"/>
<evidence type="ECO:0000255" key="2"/>
<evidence type="ECO:0000256" key="3">
    <source>
        <dbReference type="SAM" id="MobiDB-lite"/>
    </source>
</evidence>
<evidence type="ECO:0000269" key="4">
    <source>
    </source>
</evidence>
<evidence type="ECO:0000305" key="5"/>
<organism>
    <name type="scientific">Brassica napus</name>
    <name type="common">Rape</name>
    <dbReference type="NCBI Taxonomy" id="3708"/>
    <lineage>
        <taxon>Eukaryota</taxon>
        <taxon>Viridiplantae</taxon>
        <taxon>Streptophyta</taxon>
        <taxon>Embryophyta</taxon>
        <taxon>Tracheophyta</taxon>
        <taxon>Spermatophyta</taxon>
        <taxon>Magnoliopsida</taxon>
        <taxon>eudicotyledons</taxon>
        <taxon>Gunneridae</taxon>
        <taxon>Pentapetalae</taxon>
        <taxon>rosids</taxon>
        <taxon>malvids</taxon>
        <taxon>Brassicales</taxon>
        <taxon>Brassicaceae</taxon>
        <taxon>Brassiceae</taxon>
        <taxon>Brassica</taxon>
    </lineage>
</organism>
<sequence length="488" mass="53758">MARLSSLLSFSLALLTFLHGSTAQQFPNECQLDQLNALEPSHVLKAEAGRIEVWDHHAPQLRCSGVSFVRYIIESKGLYLPSFFSTARLSFVAKGEGLMGRVVLCAETFQDSSVFQPSGGSPFGEGQGQGQQGQGQGHQGQGQGQQGQQGQQGQQSQGQGFRDMHQKVEHIRTGDTIATHPGVAQWFYNDGNQPLVIVSVLDLASHQNQLDRNPRPFYLAGNNPQGQVWIEGREQQPQKNILNGFTPEVLAKAFKIDVRTAQQLQNQQDNRGNIIRVQGPFSVIRPPLRSQRPQEEVNGLEETICSARCTDNLDDPSNADVYKPQLGYISTLNSYDLPILRFLRLSALRGSIRQNAMVLPQWNANANAVLYVTDGEAHVQVVNDNGDRVFDGQVSQGQLLSIPQGFSVVKRATSEQFRWIEFKTNANAQINTLAGRTSVLRGLPLEVISNGYQISLEEARRVKFNTIETTLTHSSGPASYGGPRKADA</sequence>
<feature type="signal peptide">
    <location>
        <begin position="1"/>
        <end position="23"/>
    </location>
</feature>
<feature type="chain" id="PRO_0000032030" description="Cruciferin subunit alpha">
    <location>
        <begin position="24"/>
        <end position="298"/>
    </location>
</feature>
<feature type="chain" id="PRO_0000032031" description="Cruciferin subunit beta">
    <location>
        <begin position="299"/>
        <end position="488"/>
    </location>
</feature>
<feature type="domain" description="Cupin type-1 1" evidence="2">
    <location>
        <begin position="35"/>
        <end position="262"/>
    </location>
</feature>
<feature type="domain" description="Cupin type-1 2" evidence="2">
    <location>
        <begin position="311"/>
        <end position="460"/>
    </location>
</feature>
<feature type="region of interest" description="Disordered" evidence="3">
    <location>
        <begin position="116"/>
        <end position="163"/>
    </location>
</feature>
<feature type="compositionally biased region" description="Gly residues" evidence="3">
    <location>
        <begin position="121"/>
        <end position="147"/>
    </location>
</feature>
<feature type="compositionally biased region" description="Low complexity" evidence="3">
    <location>
        <begin position="148"/>
        <end position="160"/>
    </location>
</feature>
<feature type="disulfide bond" evidence="1">
    <location>
        <begin position="30"/>
        <end position="63"/>
    </location>
</feature>
<feature type="disulfide bond" description="Interchain (between alpha and beta chains)" evidence="4">
    <location>
        <begin position="105"/>
        <end position="305"/>
    </location>
</feature>
<feature type="sequence conflict" description="In Ref. 2; AAA32988." evidence="5" ref="2">
    <original>T</original>
    <variation>I</variation>
    <location>
        <position position="16"/>
    </location>
</feature>
<feature type="sequence conflict" description="In Ref. 2; AAA32988." evidence="5" ref="2">
    <original>R</original>
    <variation>K</variation>
    <location>
        <position position="88"/>
    </location>
</feature>
<comment type="function">
    <text>This is a seed storage protein.</text>
</comment>
<comment type="subunit">
    <text>Hexamer; each subunit is composed of an acidic and a basic chain derived from a single precursor and linked by a disulfide bond.</text>
</comment>
<comment type="subcellular location">
    <subcellularLocation>
        <location>Rough endoplasmic reticulum</location>
    </subcellularLocation>
</comment>
<comment type="similarity">
    <text evidence="5">Belongs to the 11S seed storage protein (globulins) family.</text>
</comment>
<keyword id="KW-0903">Direct protein sequencing</keyword>
<keyword id="KW-1015">Disulfide bond</keyword>
<keyword id="KW-0256">Endoplasmic reticulum</keyword>
<keyword id="KW-0708">Seed storage protein</keyword>
<keyword id="KW-0732">Signal</keyword>
<keyword id="KW-0758">Storage protein</keyword>